<organism>
    <name type="scientific">Dictyoglomus turgidum (strain DSM 6724 / Z-1310)</name>
    <dbReference type="NCBI Taxonomy" id="515635"/>
    <lineage>
        <taxon>Bacteria</taxon>
        <taxon>Pseudomonadati</taxon>
        <taxon>Dictyoglomota</taxon>
        <taxon>Dictyoglomia</taxon>
        <taxon>Dictyoglomales</taxon>
        <taxon>Dictyoglomaceae</taxon>
        <taxon>Dictyoglomus</taxon>
    </lineage>
</organism>
<comment type="function">
    <text evidence="1">Involved in the biosynthesis of branched-chain amino acids (BCAA). Catalyzes an alkyl-migration followed by a ketol-acid reduction of (S)-2-acetolactate (S2AL) to yield (R)-2,3-dihydroxy-isovalerate. In the isomerase reaction, S2AL is rearranged via a Mg-dependent methyl migration to produce 3-hydroxy-3-methyl-2-ketobutyrate (HMKB). In the reductase reaction, this 2-ketoacid undergoes a metal-dependent reduction by NADPH to yield (R)-2,3-dihydroxy-isovalerate.</text>
</comment>
<comment type="catalytic activity">
    <reaction evidence="1">
        <text>(2R)-2,3-dihydroxy-3-methylbutanoate + NADP(+) = (2S)-2-acetolactate + NADPH + H(+)</text>
        <dbReference type="Rhea" id="RHEA:22068"/>
        <dbReference type="ChEBI" id="CHEBI:15378"/>
        <dbReference type="ChEBI" id="CHEBI:49072"/>
        <dbReference type="ChEBI" id="CHEBI:57783"/>
        <dbReference type="ChEBI" id="CHEBI:58349"/>
        <dbReference type="ChEBI" id="CHEBI:58476"/>
        <dbReference type="EC" id="1.1.1.86"/>
    </reaction>
</comment>
<comment type="catalytic activity">
    <reaction evidence="1">
        <text>(2R,3R)-2,3-dihydroxy-3-methylpentanoate + NADP(+) = (S)-2-ethyl-2-hydroxy-3-oxobutanoate + NADPH + H(+)</text>
        <dbReference type="Rhea" id="RHEA:13493"/>
        <dbReference type="ChEBI" id="CHEBI:15378"/>
        <dbReference type="ChEBI" id="CHEBI:49256"/>
        <dbReference type="ChEBI" id="CHEBI:49258"/>
        <dbReference type="ChEBI" id="CHEBI:57783"/>
        <dbReference type="ChEBI" id="CHEBI:58349"/>
        <dbReference type="EC" id="1.1.1.86"/>
    </reaction>
</comment>
<comment type="cofactor">
    <cofactor evidence="1">
        <name>Mg(2+)</name>
        <dbReference type="ChEBI" id="CHEBI:18420"/>
    </cofactor>
    <text evidence="1">Binds 2 magnesium ions per subunit.</text>
</comment>
<comment type="pathway">
    <text evidence="1">Amino-acid biosynthesis; L-isoleucine biosynthesis; L-isoleucine from 2-oxobutanoate: step 2/4.</text>
</comment>
<comment type="pathway">
    <text evidence="1">Amino-acid biosynthesis; L-valine biosynthesis; L-valine from pyruvate: step 2/4.</text>
</comment>
<comment type="similarity">
    <text evidence="1">Belongs to the ketol-acid reductoisomerase family.</text>
</comment>
<name>ILVC_DICTD</name>
<accession>B8E2W8</accession>
<dbReference type="EC" id="1.1.1.86" evidence="1"/>
<dbReference type="EMBL" id="CP001251">
    <property type="protein sequence ID" value="ACK42468.1"/>
    <property type="molecule type" value="Genomic_DNA"/>
</dbReference>
<dbReference type="RefSeq" id="WP_012583550.1">
    <property type="nucleotide sequence ID" value="NC_011661.1"/>
</dbReference>
<dbReference type="RefSeq" id="YP_002353082.1">
    <property type="nucleotide sequence ID" value="NC_011661.1"/>
</dbReference>
<dbReference type="SMR" id="B8E2W8"/>
<dbReference type="FunCoup" id="B8E2W8">
    <property type="interactions" value="340"/>
</dbReference>
<dbReference type="STRING" id="515635.Dtur_1189"/>
<dbReference type="EnsemblBacteria" id="ACK42468">
    <property type="protein sequence ID" value="ACK42468"/>
    <property type="gene ID" value="Dtur_1189"/>
</dbReference>
<dbReference type="KEGG" id="dtu:Dtur_1189"/>
<dbReference type="PATRIC" id="fig|515635.4.peg.1226"/>
<dbReference type="eggNOG" id="COG0059">
    <property type="taxonomic scope" value="Bacteria"/>
</dbReference>
<dbReference type="HOGENOM" id="CLU_033821_0_1_0"/>
<dbReference type="InParanoid" id="B8E2W8"/>
<dbReference type="OrthoDB" id="9804088at2"/>
<dbReference type="UniPathway" id="UPA00047">
    <property type="reaction ID" value="UER00056"/>
</dbReference>
<dbReference type="UniPathway" id="UPA00049">
    <property type="reaction ID" value="UER00060"/>
</dbReference>
<dbReference type="Proteomes" id="UP000007719">
    <property type="component" value="Chromosome"/>
</dbReference>
<dbReference type="GO" id="GO:0005829">
    <property type="term" value="C:cytosol"/>
    <property type="evidence" value="ECO:0000318"/>
    <property type="project" value="GO_Central"/>
</dbReference>
<dbReference type="GO" id="GO:0004455">
    <property type="term" value="F:ketol-acid reductoisomerase activity"/>
    <property type="evidence" value="ECO:0000318"/>
    <property type="project" value="GO_Central"/>
</dbReference>
<dbReference type="GO" id="GO:0000287">
    <property type="term" value="F:magnesium ion binding"/>
    <property type="evidence" value="ECO:0007669"/>
    <property type="project" value="UniProtKB-UniRule"/>
</dbReference>
<dbReference type="GO" id="GO:0050661">
    <property type="term" value="F:NADP binding"/>
    <property type="evidence" value="ECO:0007669"/>
    <property type="project" value="InterPro"/>
</dbReference>
<dbReference type="GO" id="GO:0009097">
    <property type="term" value="P:isoleucine biosynthetic process"/>
    <property type="evidence" value="ECO:0000318"/>
    <property type="project" value="GO_Central"/>
</dbReference>
<dbReference type="GO" id="GO:0009099">
    <property type="term" value="P:L-valine biosynthetic process"/>
    <property type="evidence" value="ECO:0000318"/>
    <property type="project" value="GO_Central"/>
</dbReference>
<dbReference type="FunFam" id="3.40.50.720:FF:000023">
    <property type="entry name" value="Ketol-acid reductoisomerase (NADP(+))"/>
    <property type="match status" value="1"/>
</dbReference>
<dbReference type="Gene3D" id="6.10.240.10">
    <property type="match status" value="1"/>
</dbReference>
<dbReference type="Gene3D" id="3.40.50.720">
    <property type="entry name" value="NAD(P)-binding Rossmann-like Domain"/>
    <property type="match status" value="1"/>
</dbReference>
<dbReference type="HAMAP" id="MF_00435">
    <property type="entry name" value="IlvC"/>
    <property type="match status" value="1"/>
</dbReference>
<dbReference type="InterPro" id="IPR008927">
    <property type="entry name" value="6-PGluconate_DH-like_C_sf"/>
</dbReference>
<dbReference type="InterPro" id="IPR013023">
    <property type="entry name" value="KARI"/>
</dbReference>
<dbReference type="InterPro" id="IPR000506">
    <property type="entry name" value="KARI_C"/>
</dbReference>
<dbReference type="InterPro" id="IPR013116">
    <property type="entry name" value="KARI_N"/>
</dbReference>
<dbReference type="InterPro" id="IPR014359">
    <property type="entry name" value="KARI_prok"/>
</dbReference>
<dbReference type="InterPro" id="IPR036291">
    <property type="entry name" value="NAD(P)-bd_dom_sf"/>
</dbReference>
<dbReference type="NCBIfam" id="TIGR00465">
    <property type="entry name" value="ilvC"/>
    <property type="match status" value="1"/>
</dbReference>
<dbReference type="NCBIfam" id="NF004017">
    <property type="entry name" value="PRK05479.1"/>
    <property type="match status" value="1"/>
</dbReference>
<dbReference type="NCBIfam" id="NF009940">
    <property type="entry name" value="PRK13403.1"/>
    <property type="match status" value="1"/>
</dbReference>
<dbReference type="PANTHER" id="PTHR21371">
    <property type="entry name" value="KETOL-ACID REDUCTOISOMERASE, MITOCHONDRIAL"/>
    <property type="match status" value="1"/>
</dbReference>
<dbReference type="PANTHER" id="PTHR21371:SF1">
    <property type="entry name" value="KETOL-ACID REDUCTOISOMERASE, MITOCHONDRIAL"/>
    <property type="match status" value="1"/>
</dbReference>
<dbReference type="Pfam" id="PF01450">
    <property type="entry name" value="KARI_C"/>
    <property type="match status" value="1"/>
</dbReference>
<dbReference type="Pfam" id="PF07991">
    <property type="entry name" value="KARI_N"/>
    <property type="match status" value="1"/>
</dbReference>
<dbReference type="PIRSF" id="PIRSF000116">
    <property type="entry name" value="IlvC_gammaproteo"/>
    <property type="match status" value="1"/>
</dbReference>
<dbReference type="SUPFAM" id="SSF48179">
    <property type="entry name" value="6-phosphogluconate dehydrogenase C-terminal domain-like"/>
    <property type="match status" value="1"/>
</dbReference>
<dbReference type="SUPFAM" id="SSF51735">
    <property type="entry name" value="NAD(P)-binding Rossmann-fold domains"/>
    <property type="match status" value="1"/>
</dbReference>
<dbReference type="PROSITE" id="PS51851">
    <property type="entry name" value="KARI_C"/>
    <property type="match status" value="1"/>
</dbReference>
<dbReference type="PROSITE" id="PS51850">
    <property type="entry name" value="KARI_N"/>
    <property type="match status" value="1"/>
</dbReference>
<reference key="1">
    <citation type="journal article" date="2016" name="Front. Microbiol.">
        <title>The complete genome sequence of hyperthermophile Dictyoglomus turgidum DSM 6724 reveals a specialized carbohydrate fermentor.</title>
        <authorList>
            <person name="Brumm P.J."/>
            <person name="Gowda K."/>
            <person name="Robb F.T."/>
            <person name="Mead D.A."/>
        </authorList>
    </citation>
    <scope>NUCLEOTIDE SEQUENCE [LARGE SCALE GENOMIC DNA]</scope>
    <source>
        <strain>DSM 6724 / Z-1310</strain>
    </source>
</reference>
<feature type="chain" id="PRO_1000190951" description="Ketol-acid reductoisomerase (NADP(+))">
    <location>
        <begin position="1"/>
        <end position="332"/>
    </location>
</feature>
<feature type="domain" description="KARI N-terminal Rossmann" evidence="2">
    <location>
        <begin position="2"/>
        <end position="182"/>
    </location>
</feature>
<feature type="domain" description="KARI C-terminal knotted" evidence="3">
    <location>
        <begin position="183"/>
        <end position="328"/>
    </location>
</feature>
<feature type="active site" evidence="1">
    <location>
        <position position="108"/>
    </location>
</feature>
<feature type="binding site" evidence="1">
    <location>
        <begin position="25"/>
        <end position="28"/>
    </location>
    <ligand>
        <name>NADP(+)</name>
        <dbReference type="ChEBI" id="CHEBI:58349"/>
    </ligand>
</feature>
<feature type="binding site" evidence="1">
    <location>
        <position position="48"/>
    </location>
    <ligand>
        <name>NADP(+)</name>
        <dbReference type="ChEBI" id="CHEBI:58349"/>
    </ligand>
</feature>
<feature type="binding site" evidence="1">
    <location>
        <position position="53"/>
    </location>
    <ligand>
        <name>NADP(+)</name>
        <dbReference type="ChEBI" id="CHEBI:58349"/>
    </ligand>
</feature>
<feature type="binding site" evidence="1">
    <location>
        <begin position="83"/>
        <end position="86"/>
    </location>
    <ligand>
        <name>NADP(+)</name>
        <dbReference type="ChEBI" id="CHEBI:58349"/>
    </ligand>
</feature>
<feature type="binding site" evidence="1">
    <location>
        <position position="134"/>
    </location>
    <ligand>
        <name>NADP(+)</name>
        <dbReference type="ChEBI" id="CHEBI:58349"/>
    </ligand>
</feature>
<feature type="binding site" evidence="1">
    <location>
        <position position="191"/>
    </location>
    <ligand>
        <name>Mg(2+)</name>
        <dbReference type="ChEBI" id="CHEBI:18420"/>
        <label>1</label>
    </ligand>
</feature>
<feature type="binding site" evidence="1">
    <location>
        <position position="191"/>
    </location>
    <ligand>
        <name>Mg(2+)</name>
        <dbReference type="ChEBI" id="CHEBI:18420"/>
        <label>2</label>
    </ligand>
</feature>
<feature type="binding site" evidence="1">
    <location>
        <position position="195"/>
    </location>
    <ligand>
        <name>Mg(2+)</name>
        <dbReference type="ChEBI" id="CHEBI:18420"/>
        <label>1</label>
    </ligand>
</feature>
<feature type="binding site" evidence="1">
    <location>
        <position position="227"/>
    </location>
    <ligand>
        <name>Mg(2+)</name>
        <dbReference type="ChEBI" id="CHEBI:18420"/>
        <label>2</label>
    </ligand>
</feature>
<feature type="binding site" evidence="1">
    <location>
        <position position="231"/>
    </location>
    <ligand>
        <name>Mg(2+)</name>
        <dbReference type="ChEBI" id="CHEBI:18420"/>
        <label>2</label>
    </ligand>
</feature>
<feature type="binding site" evidence="1">
    <location>
        <position position="252"/>
    </location>
    <ligand>
        <name>substrate</name>
    </ligand>
</feature>
<protein>
    <recommendedName>
        <fullName evidence="1">Ketol-acid reductoisomerase (NADP(+))</fullName>
        <shortName evidence="1">KARI</shortName>
        <ecNumber evidence="1">1.1.1.86</ecNumber>
    </recommendedName>
    <alternativeName>
        <fullName evidence="1">Acetohydroxy-acid isomeroreductase</fullName>
        <shortName evidence="1">AHIR</shortName>
    </alternativeName>
    <alternativeName>
        <fullName evidence="1">Alpha-keto-beta-hydroxylacyl reductoisomerase</fullName>
    </alternativeName>
    <alternativeName>
        <fullName evidence="1">Ketol-acid reductoisomerase type 1</fullName>
    </alternativeName>
    <alternativeName>
        <fullName evidence="1">Ketol-acid reductoisomerase type I</fullName>
    </alternativeName>
</protein>
<proteinExistence type="inferred from homology"/>
<evidence type="ECO:0000255" key="1">
    <source>
        <dbReference type="HAMAP-Rule" id="MF_00435"/>
    </source>
</evidence>
<evidence type="ECO:0000255" key="2">
    <source>
        <dbReference type="PROSITE-ProRule" id="PRU01197"/>
    </source>
</evidence>
<evidence type="ECO:0000255" key="3">
    <source>
        <dbReference type="PROSITE-ProRule" id="PRU01198"/>
    </source>
</evidence>
<sequence length="332" mass="37185">MAKVYHDTEVSLEALKDKIVTIIGYGSQGRAHALNLRDSGIKVIVAVRPNGESWKRALEEGMTVEKIEDAVQKSDVLMFLIPDTEQPTIYKEKVLPYLRPNQALGFAHGFNIHFSQIVPPPFLDVFMVAPKGPGPLVRDLYVEGKGVPALFAVYQDYTQKCRDIALAYAKGIGATRAGVLETTFKEETETDLFGEQVVLCGGVTALIKAGFETLVEAGYQPEVAYYECLHEMKLIVDLINQGGISFMRKAISDTAKYGDITRGPRIVNEETKKEMRKILNEIQSGQFAKEWILENQVGRPVFNALLKKDEDHLIEKVGKVLREMMPWLKPKK</sequence>
<keyword id="KW-0028">Amino-acid biosynthesis</keyword>
<keyword id="KW-0100">Branched-chain amino acid biosynthesis</keyword>
<keyword id="KW-0460">Magnesium</keyword>
<keyword id="KW-0479">Metal-binding</keyword>
<keyword id="KW-0521">NADP</keyword>
<keyword id="KW-0560">Oxidoreductase</keyword>
<keyword id="KW-1185">Reference proteome</keyword>
<gene>
    <name evidence="1" type="primary">ilvC</name>
    <name type="ordered locus">Dtur_1189</name>
</gene>